<keyword id="KW-0131">Cell cycle</keyword>
<keyword id="KW-0132">Cell division</keyword>
<keyword id="KW-0342">GTP-binding</keyword>
<keyword id="KW-0460">Magnesium</keyword>
<keyword id="KW-0479">Metal-binding</keyword>
<keyword id="KW-0547">Nucleotide-binding</keyword>
<keyword id="KW-0717">Septation</keyword>
<sequence length="199" mass="22492">MAEEQVLNTHNASILLSAANKSHYPQDDLPEIALAGRSNVGKSSFINTILGRKNLARTSSKPGKTQLLNFFNIDNKLRFVDVPGYGYAKVSKSERAKWGKMIEEYLTSRDNLRAVVSLVDLRHAPSKEDIQMYDFLKYYDIPVIVVATKADKIPRGKWNKHESVVKKALNFDKSDTFIVFSSVERIGIDDSWDAILEQV</sequence>
<feature type="chain" id="PRO_0000157792" description="Probable GTP-binding protein EngB">
    <location>
        <begin position="1"/>
        <end position="199"/>
    </location>
</feature>
<feature type="domain" description="EngB-type G" evidence="1">
    <location>
        <begin position="28"/>
        <end position="199"/>
    </location>
</feature>
<feature type="binding site" evidence="1">
    <location>
        <begin position="36"/>
        <end position="43"/>
    </location>
    <ligand>
        <name>GTP</name>
        <dbReference type="ChEBI" id="CHEBI:37565"/>
    </ligand>
</feature>
<feature type="binding site" evidence="1">
    <location>
        <position position="43"/>
    </location>
    <ligand>
        <name>Mg(2+)</name>
        <dbReference type="ChEBI" id="CHEBI:18420"/>
    </ligand>
</feature>
<feature type="binding site" evidence="1">
    <location>
        <begin position="63"/>
        <end position="67"/>
    </location>
    <ligand>
        <name>GTP</name>
        <dbReference type="ChEBI" id="CHEBI:37565"/>
    </ligand>
</feature>
<feature type="binding site" evidence="1">
    <location>
        <position position="65"/>
    </location>
    <ligand>
        <name>Mg(2+)</name>
        <dbReference type="ChEBI" id="CHEBI:18420"/>
    </ligand>
</feature>
<feature type="binding site" evidence="1">
    <location>
        <begin position="81"/>
        <end position="84"/>
    </location>
    <ligand>
        <name>GTP</name>
        <dbReference type="ChEBI" id="CHEBI:37565"/>
    </ligand>
</feature>
<feature type="binding site" evidence="1">
    <location>
        <begin position="148"/>
        <end position="151"/>
    </location>
    <ligand>
        <name>GTP</name>
        <dbReference type="ChEBI" id="CHEBI:37565"/>
    </ligand>
</feature>
<feature type="binding site" evidence="1">
    <location>
        <begin position="180"/>
        <end position="182"/>
    </location>
    <ligand>
        <name>GTP</name>
        <dbReference type="ChEBI" id="CHEBI:37565"/>
    </ligand>
</feature>
<protein>
    <recommendedName>
        <fullName evidence="1">Probable GTP-binding protein EngB</fullName>
    </recommendedName>
</protein>
<organism>
    <name type="scientific">Streptococcus pyogenes serotype M6 (strain ATCC BAA-946 / MGAS10394)</name>
    <dbReference type="NCBI Taxonomy" id="286636"/>
    <lineage>
        <taxon>Bacteria</taxon>
        <taxon>Bacillati</taxon>
        <taxon>Bacillota</taxon>
        <taxon>Bacilli</taxon>
        <taxon>Lactobacillales</taxon>
        <taxon>Streptococcaceae</taxon>
        <taxon>Streptococcus</taxon>
    </lineage>
</organism>
<proteinExistence type="inferred from homology"/>
<accession>Q5XCL9</accession>
<comment type="function">
    <text evidence="1">Necessary for normal cell division and for the maintenance of normal septation.</text>
</comment>
<comment type="cofactor">
    <cofactor evidence="1">
        <name>Mg(2+)</name>
        <dbReference type="ChEBI" id="CHEBI:18420"/>
    </cofactor>
</comment>
<comment type="similarity">
    <text evidence="1">Belongs to the TRAFAC class TrmE-Era-EngA-EngB-Septin-like GTPase superfamily. EngB GTPase family.</text>
</comment>
<evidence type="ECO:0000255" key="1">
    <source>
        <dbReference type="HAMAP-Rule" id="MF_00321"/>
    </source>
</evidence>
<gene>
    <name evidence="1" type="primary">engB</name>
    <name type="ordered locus">M6_Spy0709</name>
</gene>
<name>ENGB_STRP6</name>
<reference key="1">
    <citation type="journal article" date="2004" name="J. Infect. Dis.">
        <title>Progress toward characterization of the group A Streptococcus metagenome: complete genome sequence of a macrolide-resistant serotype M6 strain.</title>
        <authorList>
            <person name="Banks D.J."/>
            <person name="Porcella S.F."/>
            <person name="Barbian K.D."/>
            <person name="Beres S.B."/>
            <person name="Philips L.E."/>
            <person name="Voyich J.M."/>
            <person name="DeLeo F.R."/>
            <person name="Martin J.M."/>
            <person name="Somerville G.A."/>
            <person name="Musser J.M."/>
        </authorList>
    </citation>
    <scope>NUCLEOTIDE SEQUENCE [LARGE SCALE GENOMIC DNA]</scope>
    <source>
        <strain>ATCC BAA-946 / MGAS10394</strain>
    </source>
</reference>
<dbReference type="EMBL" id="CP000003">
    <property type="protein sequence ID" value="AAT86844.1"/>
    <property type="molecule type" value="Genomic_DNA"/>
</dbReference>
<dbReference type="SMR" id="Q5XCL9"/>
<dbReference type="KEGG" id="spa:M6_Spy0709"/>
<dbReference type="HOGENOM" id="CLU_033732_3_0_9"/>
<dbReference type="Proteomes" id="UP000001167">
    <property type="component" value="Chromosome"/>
</dbReference>
<dbReference type="GO" id="GO:0005829">
    <property type="term" value="C:cytosol"/>
    <property type="evidence" value="ECO:0007669"/>
    <property type="project" value="TreeGrafter"/>
</dbReference>
<dbReference type="GO" id="GO:0005525">
    <property type="term" value="F:GTP binding"/>
    <property type="evidence" value="ECO:0007669"/>
    <property type="project" value="UniProtKB-UniRule"/>
</dbReference>
<dbReference type="GO" id="GO:0046872">
    <property type="term" value="F:metal ion binding"/>
    <property type="evidence" value="ECO:0007669"/>
    <property type="project" value="UniProtKB-KW"/>
</dbReference>
<dbReference type="GO" id="GO:0000917">
    <property type="term" value="P:division septum assembly"/>
    <property type="evidence" value="ECO:0007669"/>
    <property type="project" value="UniProtKB-KW"/>
</dbReference>
<dbReference type="CDD" id="cd01876">
    <property type="entry name" value="YihA_EngB"/>
    <property type="match status" value="1"/>
</dbReference>
<dbReference type="FunFam" id="3.40.50.300:FF:000098">
    <property type="entry name" value="Probable GTP-binding protein EngB"/>
    <property type="match status" value="1"/>
</dbReference>
<dbReference type="Gene3D" id="3.40.50.300">
    <property type="entry name" value="P-loop containing nucleotide triphosphate hydrolases"/>
    <property type="match status" value="1"/>
</dbReference>
<dbReference type="HAMAP" id="MF_00321">
    <property type="entry name" value="GTPase_EngB"/>
    <property type="match status" value="1"/>
</dbReference>
<dbReference type="InterPro" id="IPR030393">
    <property type="entry name" value="G_ENGB_dom"/>
</dbReference>
<dbReference type="InterPro" id="IPR006073">
    <property type="entry name" value="GTP-bd"/>
</dbReference>
<dbReference type="InterPro" id="IPR019987">
    <property type="entry name" value="GTP-bd_ribosome_bio_YsxC"/>
</dbReference>
<dbReference type="InterPro" id="IPR027417">
    <property type="entry name" value="P-loop_NTPase"/>
</dbReference>
<dbReference type="InterPro" id="IPR005225">
    <property type="entry name" value="Small_GTP-bd"/>
</dbReference>
<dbReference type="NCBIfam" id="TIGR03598">
    <property type="entry name" value="GTPase_YsxC"/>
    <property type="match status" value="1"/>
</dbReference>
<dbReference type="NCBIfam" id="TIGR00231">
    <property type="entry name" value="small_GTP"/>
    <property type="match status" value="1"/>
</dbReference>
<dbReference type="PANTHER" id="PTHR11649:SF13">
    <property type="entry name" value="ENGB-TYPE G DOMAIN-CONTAINING PROTEIN"/>
    <property type="match status" value="1"/>
</dbReference>
<dbReference type="PANTHER" id="PTHR11649">
    <property type="entry name" value="MSS1/TRME-RELATED GTP-BINDING PROTEIN"/>
    <property type="match status" value="1"/>
</dbReference>
<dbReference type="Pfam" id="PF01926">
    <property type="entry name" value="MMR_HSR1"/>
    <property type="match status" value="1"/>
</dbReference>
<dbReference type="SUPFAM" id="SSF52540">
    <property type="entry name" value="P-loop containing nucleoside triphosphate hydrolases"/>
    <property type="match status" value="1"/>
</dbReference>
<dbReference type="PROSITE" id="PS51706">
    <property type="entry name" value="G_ENGB"/>
    <property type="match status" value="1"/>
</dbReference>